<accession>P0DOP8</accession>
<accession>P32992</accession>
<evidence type="ECO:0000250" key="1">
    <source>
        <dbReference type="UniProtKB" id="P68456"/>
    </source>
</evidence>
<evidence type="ECO:0000305" key="2"/>
<dbReference type="EMBL" id="L22579">
    <property type="protein sequence ID" value="AAA60813.1"/>
    <property type="molecule type" value="Genomic_DNA"/>
</dbReference>
<dbReference type="EMBL" id="X76267">
    <property type="protein sequence ID" value="CAA53869.1"/>
    <property type="molecule type" value="Genomic_DNA"/>
</dbReference>
<dbReference type="PIR" id="G72158">
    <property type="entry name" value="G72158"/>
</dbReference>
<dbReference type="PIR" id="T28503">
    <property type="entry name" value="T28503"/>
</dbReference>
<dbReference type="KEGG" id="vg:1486431"/>
<dbReference type="Proteomes" id="UP000119805">
    <property type="component" value="Segment"/>
</dbReference>
<dbReference type="InterPro" id="IPR008446">
    <property type="entry name" value="Chordopox_G2"/>
</dbReference>
<dbReference type="Pfam" id="PF05796">
    <property type="entry name" value="Chordopox_G2"/>
    <property type="match status" value="1"/>
</dbReference>
<sequence>MPFRDLILFNLSKFLLTEDKESLEIVSSLCRGFEISYDDLITYFPDRKYHKYIYKVFEHVDLSEELSMEFHDTTLRDLVYLKLYKYSKCIRPCYKLGDNLKGIVVIKDRNIYIREANDDLIEYLLKEYTPQIYTYSNEHVPIAGSKLILCGFSQVTFMAYTTSHITTNKKVDVLVSKKCIDKLVDPINYQILQNLFDKGSGTINKILRKIFYSVTGGQTP</sequence>
<gene>
    <name type="primary">OPG087</name>
    <name type="ORF">G2R</name>
</gene>
<reference key="1">
    <citation type="journal article" date="1993" name="Nature">
        <title>Potential virulence determinants in terminal regions of variola smallpox virus genome.</title>
        <authorList>
            <person name="Massung R.F."/>
            <person name="Esposito J.J."/>
            <person name="Liu L.I."/>
            <person name="Qi J."/>
            <person name="Utterback T.R."/>
            <person name="Knight J.C."/>
            <person name="Aubin L."/>
            <person name="Yuran T.E."/>
            <person name="Parsons J.M."/>
            <person name="Loparev V.N."/>
            <person name="Selivanov N.A."/>
            <person name="Cavallaro K.F."/>
            <person name="Kerlavage A.R."/>
            <person name="Mahy B.W.J."/>
            <person name="Venter J.C."/>
        </authorList>
    </citation>
    <scope>NUCLEOTIDE SEQUENCE [GENOMIC DNA]</scope>
    <source>
        <strain>Bangladesh-1975</strain>
    </source>
</reference>
<reference key="2">
    <citation type="submission" date="1995-12" db="EMBL/GenBank/DDBJ databases">
        <authorList>
            <person name="Shchelkunov S.N."/>
            <person name="Sosnovtsev S.V."/>
            <person name="Totmenin A.V."/>
            <person name="Resenchuk S.M."/>
            <person name="Blinov V.M."/>
            <person name="Sandakhchiev L.S."/>
        </authorList>
    </citation>
    <scope>NUCLEOTIDE SEQUENCE [GENOMIC DNA]</scope>
    <source>
        <strain>Garcia-1966</strain>
    </source>
</reference>
<organismHost>
    <name type="scientific">Homo sapiens</name>
    <name type="common">Human</name>
    <dbReference type="NCBI Taxonomy" id="9606"/>
</organismHost>
<name>PG087_VARV</name>
<feature type="chain" id="PRO_0000448191" description="Late transcription elongation factor OPG087">
    <location>
        <begin position="1"/>
        <end position="220"/>
    </location>
</feature>
<proteinExistence type="inferred from homology"/>
<protein>
    <recommendedName>
        <fullName>Late transcription elongation factor OPG087</fullName>
    </recommendedName>
    <alternativeName>
        <fullName>Late transcription elongation factor G2</fullName>
    </alternativeName>
    <alternativeName>
        <fullName>Protein G2</fullName>
    </alternativeName>
</protein>
<comment type="function">
    <text evidence="1">Involved in postreplicative transcription elongation on intermediate and late genes.</text>
</comment>
<comment type="subunit">
    <text evidence="1">Interacts with H5 and A18. Might be part of a transcription complex composed at least of OPG087, OPG145, and OPG110.</text>
</comment>
<comment type="similarity">
    <text evidence="2">Belongs to the orthopoxvirus OPG087 family.</text>
</comment>
<keyword id="KW-0244">Early protein</keyword>
<keyword id="KW-0251">Elongation factor</keyword>
<keyword id="KW-0648">Protein biosynthesis</keyword>
<organism>
    <name type="scientific">Variola virus</name>
    <dbReference type="NCBI Taxonomy" id="10255"/>
    <lineage>
        <taxon>Viruses</taxon>
        <taxon>Varidnaviria</taxon>
        <taxon>Bamfordvirae</taxon>
        <taxon>Nucleocytoviricota</taxon>
        <taxon>Pokkesviricetes</taxon>
        <taxon>Chitovirales</taxon>
        <taxon>Poxviridae</taxon>
        <taxon>Chordopoxvirinae</taxon>
        <taxon>Orthopoxvirus</taxon>
    </lineage>
</organism>